<protein>
    <recommendedName>
        <fullName evidence="1">NADH-quinone oxidoreductase subunit H</fullName>
        <ecNumber evidence="1">7.1.1.-</ecNumber>
    </recommendedName>
    <alternativeName>
        <fullName evidence="1">NADH dehydrogenase I subunit H</fullName>
    </alternativeName>
    <alternativeName>
        <fullName evidence="1">NDH-1 subunit H</fullName>
    </alternativeName>
</protein>
<accession>C3P1E5</accession>
<comment type="function">
    <text evidence="1">NDH-1 shuttles electrons from NADH, via FMN and iron-sulfur (Fe-S) centers, to quinones in the respiratory chain. The immediate electron acceptor for the enzyme in this species is believed to be ubiquinone. Couples the redox reaction to proton translocation (for every two electrons transferred, four hydrogen ions are translocated across the cytoplasmic membrane), and thus conserves the redox energy in a proton gradient. This subunit may bind ubiquinone.</text>
</comment>
<comment type="catalytic activity">
    <reaction evidence="1">
        <text>a quinone + NADH + 5 H(+)(in) = a quinol + NAD(+) + 4 H(+)(out)</text>
        <dbReference type="Rhea" id="RHEA:57888"/>
        <dbReference type="ChEBI" id="CHEBI:15378"/>
        <dbReference type="ChEBI" id="CHEBI:24646"/>
        <dbReference type="ChEBI" id="CHEBI:57540"/>
        <dbReference type="ChEBI" id="CHEBI:57945"/>
        <dbReference type="ChEBI" id="CHEBI:132124"/>
    </reaction>
</comment>
<comment type="subunit">
    <text evidence="1">NDH-1 is composed of 14 different subunits. Subunits NuoA, H, J, K, L, M, N constitute the membrane sector of the complex.</text>
</comment>
<comment type="subcellular location">
    <subcellularLocation>
        <location evidence="1">Cell membrane</location>
        <topology evidence="1">Multi-pass membrane protein</topology>
    </subcellularLocation>
</comment>
<comment type="similarity">
    <text evidence="1">Belongs to the complex I subunit 1 family.</text>
</comment>
<dbReference type="EC" id="7.1.1.-" evidence="1"/>
<dbReference type="EMBL" id="CP001598">
    <property type="protein sequence ID" value="ACQ47074.1"/>
    <property type="molecule type" value="Genomic_DNA"/>
</dbReference>
<dbReference type="RefSeq" id="WP_000573430.1">
    <property type="nucleotide sequence ID" value="NC_012659.1"/>
</dbReference>
<dbReference type="SMR" id="C3P1E5"/>
<dbReference type="GeneID" id="93005827"/>
<dbReference type="KEGG" id="bai:BAA_5566"/>
<dbReference type="HOGENOM" id="CLU_015134_0_1_9"/>
<dbReference type="GO" id="GO:0005886">
    <property type="term" value="C:plasma membrane"/>
    <property type="evidence" value="ECO:0007669"/>
    <property type="project" value="UniProtKB-SubCell"/>
</dbReference>
<dbReference type="GO" id="GO:0003954">
    <property type="term" value="F:NADH dehydrogenase activity"/>
    <property type="evidence" value="ECO:0007669"/>
    <property type="project" value="TreeGrafter"/>
</dbReference>
<dbReference type="GO" id="GO:0016655">
    <property type="term" value="F:oxidoreductase activity, acting on NAD(P)H, quinone or similar compound as acceptor"/>
    <property type="evidence" value="ECO:0007669"/>
    <property type="project" value="UniProtKB-UniRule"/>
</dbReference>
<dbReference type="GO" id="GO:0048038">
    <property type="term" value="F:quinone binding"/>
    <property type="evidence" value="ECO:0007669"/>
    <property type="project" value="UniProtKB-KW"/>
</dbReference>
<dbReference type="GO" id="GO:0009060">
    <property type="term" value="P:aerobic respiration"/>
    <property type="evidence" value="ECO:0007669"/>
    <property type="project" value="TreeGrafter"/>
</dbReference>
<dbReference type="HAMAP" id="MF_01350">
    <property type="entry name" value="NDH1_NuoH"/>
    <property type="match status" value="1"/>
</dbReference>
<dbReference type="InterPro" id="IPR001694">
    <property type="entry name" value="NADH_UbQ_OxRdtase_su1/FPO"/>
</dbReference>
<dbReference type="InterPro" id="IPR018086">
    <property type="entry name" value="NADH_UbQ_OxRdtase_su1_CS"/>
</dbReference>
<dbReference type="NCBIfam" id="NF004741">
    <property type="entry name" value="PRK06076.1-2"/>
    <property type="match status" value="1"/>
</dbReference>
<dbReference type="PANTHER" id="PTHR11432">
    <property type="entry name" value="NADH DEHYDROGENASE SUBUNIT 1"/>
    <property type="match status" value="1"/>
</dbReference>
<dbReference type="PANTHER" id="PTHR11432:SF3">
    <property type="entry name" value="NADH-UBIQUINONE OXIDOREDUCTASE CHAIN 1"/>
    <property type="match status" value="1"/>
</dbReference>
<dbReference type="Pfam" id="PF00146">
    <property type="entry name" value="NADHdh"/>
    <property type="match status" value="1"/>
</dbReference>
<dbReference type="PROSITE" id="PS00668">
    <property type="entry name" value="COMPLEX1_ND1_2"/>
    <property type="match status" value="1"/>
</dbReference>
<gene>
    <name evidence="1" type="primary">nuoH</name>
    <name type="ordered locus">BAA_5566</name>
</gene>
<name>NUOH_BACAA</name>
<evidence type="ECO:0000255" key="1">
    <source>
        <dbReference type="HAMAP-Rule" id="MF_01350"/>
    </source>
</evidence>
<sequence>MIETLLQSPSSWTNFFIFFGLAVLLLFAVLGFVTYGILAERKVMGFMQGRIGPNQVGGRFGLLQTVADVLKLLLKEDSIPKAADKPLFILAPVIAFAPAFMVLAVIPFTDKFQFADIGVGLLYYIAVSGITTIGVVTGGWASNNKYSLLGGMRAAAQMISYEIPLVMSVIGIVLLAGSLNLNEIVAAQENVWYIFVQPIGFVVFLIAAVAELNRTPFDLPEAESELVSGYHTEYSGFRWAFFMLSEYVYFFGMASLITVLFLGGWNPVMFLGFIPGAVWFALKFSSVVFLLIWFRVTFPRIRGDQLMEFGWKVLLPIALANIFLTALIKELFF</sequence>
<proteinExistence type="inferred from homology"/>
<organism>
    <name type="scientific">Bacillus anthracis (strain A0248)</name>
    <dbReference type="NCBI Taxonomy" id="592021"/>
    <lineage>
        <taxon>Bacteria</taxon>
        <taxon>Bacillati</taxon>
        <taxon>Bacillota</taxon>
        <taxon>Bacilli</taxon>
        <taxon>Bacillales</taxon>
        <taxon>Bacillaceae</taxon>
        <taxon>Bacillus</taxon>
        <taxon>Bacillus cereus group</taxon>
    </lineage>
</organism>
<reference key="1">
    <citation type="submission" date="2009-04" db="EMBL/GenBank/DDBJ databases">
        <title>Genome sequence of Bacillus anthracis A0248.</title>
        <authorList>
            <person name="Dodson R.J."/>
            <person name="Munk A.C."/>
            <person name="Bruce D."/>
            <person name="Detter C."/>
            <person name="Tapia R."/>
            <person name="Sutton G."/>
            <person name="Sims D."/>
            <person name="Brettin T."/>
        </authorList>
    </citation>
    <scope>NUCLEOTIDE SEQUENCE [LARGE SCALE GENOMIC DNA]</scope>
    <source>
        <strain>A0248</strain>
    </source>
</reference>
<keyword id="KW-1003">Cell membrane</keyword>
<keyword id="KW-0472">Membrane</keyword>
<keyword id="KW-0520">NAD</keyword>
<keyword id="KW-0874">Quinone</keyword>
<keyword id="KW-1278">Translocase</keyword>
<keyword id="KW-0812">Transmembrane</keyword>
<keyword id="KW-1133">Transmembrane helix</keyword>
<keyword id="KW-0830">Ubiquinone</keyword>
<feature type="chain" id="PRO_1000166617" description="NADH-quinone oxidoreductase subunit H">
    <location>
        <begin position="1"/>
        <end position="333"/>
    </location>
</feature>
<feature type="transmembrane region" description="Helical" evidence="1">
    <location>
        <begin position="15"/>
        <end position="35"/>
    </location>
</feature>
<feature type="transmembrane region" description="Helical" evidence="1">
    <location>
        <begin position="88"/>
        <end position="108"/>
    </location>
</feature>
<feature type="transmembrane region" description="Helical" evidence="1">
    <location>
        <begin position="117"/>
        <end position="137"/>
    </location>
</feature>
<feature type="transmembrane region" description="Helical" evidence="1">
    <location>
        <begin position="159"/>
        <end position="179"/>
    </location>
</feature>
<feature type="transmembrane region" description="Helical" evidence="1">
    <location>
        <begin position="191"/>
        <end position="211"/>
    </location>
</feature>
<feature type="transmembrane region" description="Helical" evidence="1">
    <location>
        <begin position="239"/>
        <end position="259"/>
    </location>
</feature>
<feature type="transmembrane region" description="Helical" evidence="1">
    <location>
        <begin position="274"/>
        <end position="296"/>
    </location>
</feature>
<feature type="transmembrane region" description="Helical" evidence="1">
    <location>
        <begin position="313"/>
        <end position="333"/>
    </location>
</feature>